<dbReference type="EC" id="3.2.2.22" evidence="2 4 7"/>
<dbReference type="EMBL" id="X55383">
    <property type="protein sequence ID" value="CAA39054.1"/>
    <property type="molecule type" value="mRNA"/>
</dbReference>
<dbReference type="PIR" id="S17757">
    <property type="entry name" value="S17757"/>
</dbReference>
<dbReference type="PDB" id="1D6A">
    <property type="method" value="X-ray"/>
    <property type="resolution" value="2.10 A"/>
    <property type="chains" value="A/B=23-284"/>
</dbReference>
<dbReference type="PDB" id="1PAF">
    <property type="method" value="X-ray"/>
    <property type="resolution" value="2.50 A"/>
    <property type="chains" value="A/B=23-284"/>
</dbReference>
<dbReference type="PDB" id="1PAG">
    <property type="method" value="X-ray"/>
    <property type="resolution" value="2.80 A"/>
    <property type="chains" value="A/B=23-284"/>
</dbReference>
<dbReference type="PDB" id="1QCG">
    <property type="method" value="X-ray"/>
    <property type="resolution" value="2.10 A"/>
    <property type="chains" value="A/B=23-284"/>
</dbReference>
<dbReference type="PDB" id="1QCI">
    <property type="method" value="X-ray"/>
    <property type="resolution" value="2.00 A"/>
    <property type="chains" value="A/B=23-284"/>
</dbReference>
<dbReference type="PDB" id="1QCJ">
    <property type="method" value="X-ray"/>
    <property type="resolution" value="2.10 A"/>
    <property type="chains" value="A/B=23-284"/>
</dbReference>
<dbReference type="PDBsum" id="1D6A"/>
<dbReference type="PDBsum" id="1PAF"/>
<dbReference type="PDBsum" id="1PAG"/>
<dbReference type="PDBsum" id="1QCG"/>
<dbReference type="PDBsum" id="1QCI"/>
<dbReference type="PDBsum" id="1QCJ"/>
<dbReference type="SMR" id="P10297"/>
<dbReference type="BRENDA" id="3.2.2.22">
    <property type="organism ID" value="4806"/>
</dbReference>
<dbReference type="EvolutionaryTrace" id="P10297"/>
<dbReference type="GO" id="GO:0030598">
    <property type="term" value="F:rRNA N-glycosylase activity"/>
    <property type="evidence" value="ECO:0007669"/>
    <property type="project" value="UniProtKB-EC"/>
</dbReference>
<dbReference type="GO" id="GO:0090729">
    <property type="term" value="F:toxin activity"/>
    <property type="evidence" value="ECO:0007669"/>
    <property type="project" value="UniProtKB-KW"/>
</dbReference>
<dbReference type="GO" id="GO:0051607">
    <property type="term" value="P:defense response to virus"/>
    <property type="evidence" value="ECO:0007669"/>
    <property type="project" value="UniProtKB-KW"/>
</dbReference>
<dbReference type="GO" id="GO:0017148">
    <property type="term" value="P:negative regulation of translation"/>
    <property type="evidence" value="ECO:0007669"/>
    <property type="project" value="UniProtKB-KW"/>
</dbReference>
<dbReference type="FunFam" id="4.10.470.10:FF:000002">
    <property type="entry name" value="Antiviral protein I"/>
    <property type="match status" value="1"/>
</dbReference>
<dbReference type="FunFam" id="3.40.420.10:FF:000001">
    <property type="entry name" value="Ricin"/>
    <property type="match status" value="1"/>
</dbReference>
<dbReference type="Gene3D" id="3.40.420.10">
    <property type="entry name" value="Ricin (A subunit), domain 1"/>
    <property type="match status" value="1"/>
</dbReference>
<dbReference type="Gene3D" id="4.10.470.10">
    <property type="entry name" value="Ricin (A Subunit), domain 2"/>
    <property type="match status" value="1"/>
</dbReference>
<dbReference type="InterPro" id="IPR036041">
    <property type="entry name" value="Ribosome-inact_prot_sf"/>
</dbReference>
<dbReference type="InterPro" id="IPR017989">
    <property type="entry name" value="Ribosome_inactivat_1/2"/>
</dbReference>
<dbReference type="InterPro" id="IPR001574">
    <property type="entry name" value="Ribosome_inactivat_prot"/>
</dbReference>
<dbReference type="InterPro" id="IPR017988">
    <property type="entry name" value="Ribosome_inactivat_prot_CS"/>
</dbReference>
<dbReference type="InterPro" id="IPR016138">
    <property type="entry name" value="Ribosome_inactivat_prot_sub1"/>
</dbReference>
<dbReference type="InterPro" id="IPR016139">
    <property type="entry name" value="Ribosome_inactivat_prot_sub2"/>
</dbReference>
<dbReference type="InterPro" id="IPR016331">
    <property type="entry name" value="Shiga-like_toxin_subunit_A"/>
</dbReference>
<dbReference type="PANTHER" id="PTHR33453">
    <property type="match status" value="1"/>
</dbReference>
<dbReference type="PANTHER" id="PTHR33453:SF34">
    <property type="entry name" value="RIBOSOME-INACTIVATING PROTEIN"/>
    <property type="match status" value="1"/>
</dbReference>
<dbReference type="Pfam" id="PF00161">
    <property type="entry name" value="RIP"/>
    <property type="match status" value="1"/>
</dbReference>
<dbReference type="PIRSF" id="PIRSF001924">
    <property type="entry name" value="Shigella_toxin_subunit_A"/>
    <property type="match status" value="1"/>
</dbReference>
<dbReference type="PRINTS" id="PR00396">
    <property type="entry name" value="SHIGARICIN"/>
</dbReference>
<dbReference type="SUPFAM" id="SSF56371">
    <property type="entry name" value="Ribosome inactivating proteins (RIP)"/>
    <property type="match status" value="1"/>
</dbReference>
<dbReference type="PROSITE" id="PS00275">
    <property type="entry name" value="SHIGA_RICIN"/>
    <property type="match status" value="1"/>
</dbReference>
<name>RIP1_PHYAM</name>
<reference key="1">
    <citation type="journal article" date="1991" name="Plant Mol. Biol.">
        <title>Isolation and characterization of a cDNA clone encoding the anti-viral protein from Phytolacca americana.</title>
        <authorList>
            <person name="Lin Q."/>
            <person name="Chen Z.C."/>
            <person name="Antoniw J.F."/>
            <person name="White R.F."/>
        </authorList>
    </citation>
    <scope>NUCLEOTIDE SEQUENCE [MRNA]</scope>
    <scope>PROTEIN SEQUENCE OF 23-62</scope>
    <source>
        <tissue>Leaf</tissue>
    </source>
</reference>
<reference key="2">
    <citation type="journal article" date="1989" name="Biochem. J.">
        <title>Ribosome-inactivating proteins from plant cells in culture.</title>
        <authorList>
            <person name="Barbieri L."/>
            <person name="Bolognesi A."/>
            <person name="Cenini P."/>
            <person name="Falasca A.I."/>
            <person name="Minghetti A."/>
            <person name="Garofano L."/>
            <person name="Guicciardi A."/>
            <person name="Lappi D."/>
            <person name="Miller S.P."/>
        </authorList>
    </citation>
    <scope>PROTEIN SEQUENCE OF 23-65</scope>
    <scope>FUNCTION</scope>
    <scope>CATALYTIC ACTIVITY</scope>
    <scope>TOXIC DOSE</scope>
    <source>
        <tissue evidence="13">Leaf</tissue>
    </source>
</reference>
<reference key="3">
    <citation type="journal article" date="1983" name="J. Biol. Chem.">
        <title>Seasonal variations in different forms of pokeweed antiviral protein, a potent inactivator of ribosomes.</title>
        <authorList>
            <person name="Houston L.L."/>
            <person name="Ramakrishnan S."/>
            <person name="Hermodson M.A."/>
        </authorList>
    </citation>
    <scope>PROTEIN SEQUENCE OF 23-54</scope>
    <source>
        <tissue>Leaf</tissue>
    </source>
</reference>
<reference key="4">
    <citation type="journal article" date="1984" name="Biochim. Biophys. Acta">
        <title>Characterization of translational inhibitors from Phytolacca americana. Amino-terminal sequence determination and antibody-inhibitor conjugates.</title>
        <authorList>
            <person name="Bjorn M.J."/>
            <person name="Larrick J."/>
            <person name="Piatak M."/>
            <person name="Wilson K.J."/>
        </authorList>
    </citation>
    <scope>PROTEIN SEQUENCE OF 23-54</scope>
    <scope>FUNCTION</scope>
    <source>
        <tissue>Leaf</tissue>
    </source>
</reference>
<reference key="5">
    <citation type="journal article" date="1990" name="Biochim. Biophys. Acta">
        <title>Purification and properties of new ribosome-inactivating proteins with RNA N-glycosidase activity.</title>
        <authorList>
            <person name="Bolognesi A."/>
            <person name="Barbieri L."/>
            <person name="Abbondanza A."/>
            <person name="Falasca A.I."/>
            <person name="Carnicelli D."/>
            <person name="Battelli M.G."/>
            <person name="Stirpe F."/>
        </authorList>
    </citation>
    <scope>PROTEIN SEQUENCE OF 23-54</scope>
    <scope>FUNCTION</scope>
    <scope>TISSUE SPECIFICITY</scope>
    <source>
        <tissue evidence="12">Root</tissue>
    </source>
</reference>
<reference key="6">
    <citation type="journal article" date="1999" name="Biochem. Biophys. Res. Commun.">
        <title>Pokeweed antiviral protein isoforms PAP-I, PAP-II, and PAP-III depurinate RNA of human immunodeficiency virus (HIV)-1.</title>
        <authorList>
            <person name="Rajamohan F."/>
            <person name="Venkatachalam T.K."/>
            <person name="Irvin J.D."/>
            <person name="Uckun F.M."/>
        </authorList>
    </citation>
    <scope>FUNCTION</scope>
    <scope>CATALYTIC ACTIVITY</scope>
    <scope>TISSUE SPECIFICITY</scope>
    <scope>MISCELLANEOUS</scope>
</reference>
<reference evidence="16 17" key="7">
    <citation type="journal article" date="1993" name="J. Mol. Biol.">
        <title>The 2.5 A structure of pokeweed antiviral protein.</title>
        <authorList>
            <person name="Monzingo A.F."/>
            <person name="Collins E.J."/>
            <person name="Ernst S.R."/>
            <person name="Irvin J.D."/>
            <person name="Robertus J.D."/>
        </authorList>
    </citation>
    <scope>X-RAY CRYSTALLOGRAPHY (2.5 ANGSTROMS) OF 23-284 AND IN COMPLEX WITH SUBSTRATE ANALOG</scope>
</reference>
<reference evidence="18 19 20" key="8">
    <citation type="journal article" date="1999" name="Protein Sci.">
        <title>X-ray crystallographic analysis of the structural basis for the interactions of pokeweed antiviral protein with its active site inhibitor and ribosomal RNA substrate analogs.</title>
        <authorList>
            <person name="Kurinov I.V."/>
            <person name="Myers D.E."/>
            <person name="Irvin J.D."/>
            <person name="Uckun F.M."/>
        </authorList>
    </citation>
    <scope>X-RAY CRYSTALLOGRAPHY (2.0 ANGSTROMS) OF 23-284 AND IN COMPLEX WITH ADENINE AND INHIBITOR</scope>
</reference>
<reference evidence="15" key="9">
    <citation type="journal article" date="1999" name="Protein Sci.">
        <title>X-ray crystallographic analysis of the structural basis for the interaction of pokeweed antiviral protein with guanine residues of ribosomal RNA.</title>
        <authorList>
            <person name="Kurinov I.V."/>
            <person name="Rajamohan F."/>
            <person name="Venkatachalam T.K."/>
            <person name="Uckun F.M."/>
        </authorList>
    </citation>
    <scope>X-RAY CRYSTALLOGRAPHY (2.1 ANGSTROMS) OF 23-284 IN COMPLEX WITH GUANINE</scope>
    <scope>FUNCTION</scope>
    <scope>CATALYTIC ACTIVITY</scope>
    <scope>SUBUNIT</scope>
    <scope>TISSUE SPECIFICITY</scope>
    <scope>DISULFIDE BONDS</scope>
</reference>
<proteinExistence type="evidence at protein level"/>
<sequence>MKSMLVVTISIWLILAPTSTWAVNTIIYNVGSTTISKYATFLNDLRNEAKDPSLKCYGIPMLPNTNTNPKYVLVELQGSNKKTITLMLRRNNLYVMGYSDPFETNKCRYHIFNDISGTERQDVETTLCPNANSRVSKNINFDSRYPTLESKAGVKSRSQVQLGIQILDSNIGKISGVMSFTEKTEAEFLLVAIQMVSEAARFKYIENQVKTNFNRAFNPNPKVLNLQETWGKISTAIHDAKNGVLPKPLELVDASGAKWIVLRVDEIKPDVALLNYVGGSCQTTYNQNAMFPQLIMSTYYNYMVNLGDLFEGF</sequence>
<comment type="function">
    <text evidence="2 4 6 7 8">Possesses antiviral potency. Inhibits viral infection of plants (tobacco mosaic virus) (PubMed:10403789). Inhibits protein synthesis (PubMed:10403789, PubMed:10595542, PubMed:2248976, PubMed:2930487, PubMed:6091760). Releases both adenine and guanine from Escherichia coli rRNA in vitro. Activity on guanine is 20 times slower than that on adenine (PubMed:10595542).</text>
</comment>
<comment type="catalytic activity">
    <reaction evidence="2 4 7">
        <text>Endohydrolysis of the N-glycosidic bond at one specific adenosine on the 28S rRNA.</text>
        <dbReference type="EC" id="3.2.2.22"/>
    </reaction>
</comment>
<comment type="subunit">
    <text evidence="4">Monomer.</text>
</comment>
<comment type="tissue specificity">
    <text evidence="4 6">Expressed in spring leaves (at protein level) (PubMed:10403789, PubMed:10595542). Expressed in roots (at protein level) (PubMed:2248976).</text>
</comment>
<comment type="toxic dose">
    <text evidence="7">LD(50) is 1.89 mg/kg by intraperitoneal injection into mice (at 48 hours post-injection).</text>
</comment>
<comment type="toxic dose">
    <text evidence="7">LD(50) is 0.95 mg/kg by intraperitoneal injection into mice (at 14 days post-injection).</text>
</comment>
<comment type="miscellaneous">
    <text evidence="2">Depurinates genomic RNA of immunodeficiency virus type-I (HIV-I) and bacteriophage (MS 2) RNA. Inhibits the replication of HIV-1 in human peripheral blood mononuclear cells with IC(50) value of 14 nM.</text>
</comment>
<comment type="similarity">
    <text evidence="14">Belongs to the ribosome-inactivating protein family. Type 1 RIP subfamily.</text>
</comment>
<gene>
    <name type="primary">PAP1</name>
</gene>
<keyword id="KW-0002">3D-structure</keyword>
<keyword id="KW-0051">Antiviral defense</keyword>
<keyword id="KW-0903">Direct protein sequencing</keyword>
<keyword id="KW-1015">Disulfide bond</keyword>
<keyword id="KW-0378">Hydrolase</keyword>
<keyword id="KW-0611">Plant defense</keyword>
<keyword id="KW-0652">Protein synthesis inhibitor</keyword>
<keyword id="KW-0732">Signal</keyword>
<keyword id="KW-0800">Toxin</keyword>
<organism>
    <name type="scientific">Phytolacca americana</name>
    <name type="common">American pokeweed</name>
    <name type="synonym">Phytolacca decandra</name>
    <dbReference type="NCBI Taxonomy" id="3527"/>
    <lineage>
        <taxon>Eukaryota</taxon>
        <taxon>Viridiplantae</taxon>
        <taxon>Streptophyta</taxon>
        <taxon>Embryophyta</taxon>
        <taxon>Tracheophyta</taxon>
        <taxon>Spermatophyta</taxon>
        <taxon>Magnoliopsida</taxon>
        <taxon>eudicotyledons</taxon>
        <taxon>Gunneridae</taxon>
        <taxon>Pentapetalae</taxon>
        <taxon>Caryophyllales</taxon>
        <taxon>Phytolaccaceae</taxon>
        <taxon>Phytolacca</taxon>
    </lineage>
</organism>
<feature type="signal peptide" evidence="5 6 7 8 9">
    <location>
        <begin position="1"/>
        <end position="22"/>
    </location>
</feature>
<feature type="chain" id="PRO_0000030781" description="Antiviral protein I">
    <location>
        <begin position="23"/>
        <end position="285"/>
    </location>
</feature>
<feature type="propeptide" id="PRO_0000030782">
    <location>
        <begin position="286"/>
        <end position="313"/>
    </location>
</feature>
<feature type="active site" evidence="1">
    <location>
        <position position="94"/>
    </location>
</feature>
<feature type="active site" evidence="1">
    <location>
        <position position="145"/>
    </location>
</feature>
<feature type="active site" evidence="1">
    <location>
        <position position="198"/>
    </location>
</feature>
<feature type="active site" evidence="1">
    <location>
        <position position="201"/>
    </location>
</feature>
<feature type="binding site" evidence="3 4 10 15 17 19 20">
    <location>
        <position position="95"/>
    </location>
    <ligand>
        <name>substrate</name>
    </ligand>
</feature>
<feature type="binding site" evidence="3 4 10 15 17 20">
    <location>
        <position position="143"/>
    </location>
    <ligand>
        <name>substrate</name>
    </ligand>
</feature>
<feature type="binding site" evidence="3 20">
    <location>
        <position position="197"/>
    </location>
    <ligand>
        <name>substrate</name>
    </ligand>
</feature>
<feature type="binding site" evidence="3 4 10 15 17 19">
    <location>
        <position position="201"/>
    </location>
    <ligand>
        <name>substrate</name>
    </ligand>
</feature>
<feature type="disulfide bond" evidence="4 15">
    <location>
        <begin position="56"/>
        <end position="281"/>
    </location>
</feature>
<feature type="disulfide bond" evidence="4 15">
    <location>
        <begin position="107"/>
        <end position="128"/>
    </location>
</feature>
<feature type="strand" evidence="23">
    <location>
        <begin position="25"/>
        <end position="32"/>
    </location>
</feature>
<feature type="helix" evidence="23">
    <location>
        <begin position="35"/>
        <end position="49"/>
    </location>
</feature>
<feature type="strand" evidence="23">
    <location>
        <begin position="59"/>
        <end position="61"/>
    </location>
</feature>
<feature type="strand" evidence="23">
    <location>
        <begin position="71"/>
        <end position="77"/>
    </location>
</feature>
<feature type="helix" evidence="21">
    <location>
        <begin position="79"/>
        <end position="81"/>
    </location>
</feature>
<feature type="strand" evidence="23">
    <location>
        <begin position="83"/>
        <end position="89"/>
    </location>
</feature>
<feature type="turn" evidence="23">
    <location>
        <begin position="90"/>
        <end position="92"/>
    </location>
</feature>
<feature type="strand" evidence="23">
    <location>
        <begin position="95"/>
        <end position="102"/>
    </location>
</feature>
<feature type="turn" evidence="23">
    <location>
        <begin position="103"/>
        <end position="105"/>
    </location>
</feature>
<feature type="strand" evidence="23">
    <location>
        <begin position="106"/>
        <end position="112"/>
    </location>
</feature>
<feature type="helix" evidence="23">
    <location>
        <begin position="118"/>
        <end position="127"/>
    </location>
</feature>
<feature type="turn" evidence="23">
    <location>
        <begin position="131"/>
        <end position="133"/>
    </location>
</feature>
<feature type="strand" evidence="23">
    <location>
        <begin position="134"/>
        <end position="136"/>
    </location>
</feature>
<feature type="strand" evidence="22">
    <location>
        <begin position="139"/>
        <end position="141"/>
    </location>
</feature>
<feature type="helix" evidence="23">
    <location>
        <begin position="145"/>
        <end position="152"/>
    </location>
</feature>
<feature type="helix" evidence="23">
    <location>
        <begin position="157"/>
        <end position="159"/>
    </location>
</feature>
<feature type="helix" evidence="23">
    <location>
        <begin position="164"/>
        <end position="174"/>
    </location>
</feature>
<feature type="helix" evidence="23">
    <location>
        <begin position="182"/>
        <end position="201"/>
    </location>
</feature>
<feature type="helix" evidence="23">
    <location>
        <begin position="203"/>
        <end position="211"/>
    </location>
</feature>
<feature type="turn" evidence="23">
    <location>
        <begin position="212"/>
        <end position="214"/>
    </location>
</feature>
<feature type="helix" evidence="23">
    <location>
        <begin position="221"/>
        <end position="239"/>
    </location>
</feature>
<feature type="strand" evidence="23">
    <location>
        <begin position="244"/>
        <end position="252"/>
    </location>
</feature>
<feature type="strand" evidence="23">
    <location>
        <begin position="258"/>
        <end position="263"/>
    </location>
</feature>
<feature type="helix" evidence="23">
    <location>
        <begin position="264"/>
        <end position="267"/>
    </location>
</feature>
<feature type="helix" evidence="23">
    <location>
        <begin position="268"/>
        <end position="270"/>
    </location>
</feature>
<protein>
    <recommendedName>
        <fullName>Antiviral protein I</fullName>
        <ecNumber evidence="2 4 7">3.2.2.22</ecNumber>
    </recommendedName>
    <alternativeName>
        <fullName evidence="13">PAP-C</fullName>
    </alternativeName>
    <alternativeName>
        <fullName evidence="11">PAP-I</fullName>
    </alternativeName>
    <alternativeName>
        <fullName evidence="12">PAP-R</fullName>
    </alternativeName>
    <alternativeName>
        <fullName>Ribosome-inactivating protein</fullName>
    </alternativeName>
    <alternativeName>
        <fullName>rRNA N-glycosidase</fullName>
    </alternativeName>
</protein>
<evidence type="ECO:0000250" key="1">
    <source>
        <dbReference type="UniProtKB" id="P84531"/>
    </source>
</evidence>
<evidence type="ECO:0000269" key="2">
    <source>
    </source>
</evidence>
<evidence type="ECO:0000269" key="3">
    <source>
    </source>
</evidence>
<evidence type="ECO:0000269" key="4">
    <source>
    </source>
</evidence>
<evidence type="ECO:0000269" key="5">
    <source>
    </source>
</evidence>
<evidence type="ECO:0000269" key="6">
    <source>
    </source>
</evidence>
<evidence type="ECO:0000269" key="7">
    <source>
    </source>
</evidence>
<evidence type="ECO:0000269" key="8">
    <source>
    </source>
</evidence>
<evidence type="ECO:0000269" key="9">
    <source>
    </source>
</evidence>
<evidence type="ECO:0000269" key="10">
    <source>
    </source>
</evidence>
<evidence type="ECO:0000303" key="11">
    <source>
    </source>
</evidence>
<evidence type="ECO:0000303" key="12">
    <source>
    </source>
</evidence>
<evidence type="ECO:0000303" key="13">
    <source>
    </source>
</evidence>
<evidence type="ECO:0000305" key="14"/>
<evidence type="ECO:0007744" key="15">
    <source>
        <dbReference type="PDB" id="1D6A"/>
    </source>
</evidence>
<evidence type="ECO:0007744" key="16">
    <source>
        <dbReference type="PDB" id="1PAF"/>
    </source>
</evidence>
<evidence type="ECO:0007744" key="17">
    <source>
        <dbReference type="PDB" id="1PAG"/>
    </source>
</evidence>
<evidence type="ECO:0007744" key="18">
    <source>
        <dbReference type="PDB" id="1QCG"/>
    </source>
</evidence>
<evidence type="ECO:0007744" key="19">
    <source>
        <dbReference type="PDB" id="1QCI"/>
    </source>
</evidence>
<evidence type="ECO:0007744" key="20">
    <source>
        <dbReference type="PDB" id="1QCJ"/>
    </source>
</evidence>
<evidence type="ECO:0007829" key="21">
    <source>
        <dbReference type="PDB" id="1D6A"/>
    </source>
</evidence>
<evidence type="ECO:0007829" key="22">
    <source>
        <dbReference type="PDB" id="1PAF"/>
    </source>
</evidence>
<evidence type="ECO:0007829" key="23">
    <source>
        <dbReference type="PDB" id="1QCI"/>
    </source>
</evidence>
<accession>P10297</accession>